<feature type="chain" id="PRO_0000445610" description="Trichodiene synthase">
    <location>
        <begin position="1"/>
        <end position="388"/>
    </location>
</feature>
<feature type="region of interest" description="Aspartate-rich domain" evidence="1">
    <location>
        <begin position="109"/>
        <end position="113"/>
    </location>
</feature>
<feature type="binding site" evidence="1">
    <location>
        <position position="109"/>
    </location>
    <ligand>
        <name>Mg(2+)</name>
        <dbReference type="ChEBI" id="CHEBI:18420"/>
        <label>1</label>
    </ligand>
</feature>
<feature type="binding site" evidence="1">
    <location>
        <position position="173"/>
    </location>
    <ligand>
        <name>Mg(2+)</name>
        <dbReference type="ChEBI" id="CHEBI:18420"/>
        <label>1</label>
    </ligand>
</feature>
<feature type="binding site" evidence="1">
    <location>
        <position position="234"/>
    </location>
    <ligand>
        <name>Mg(2+)</name>
        <dbReference type="ChEBI" id="CHEBI:18420"/>
        <label>2</label>
    </ligand>
</feature>
<feature type="binding site" evidence="1">
    <location>
        <position position="238"/>
    </location>
    <ligand>
        <name>Mg(2+)</name>
        <dbReference type="ChEBI" id="CHEBI:18420"/>
        <label>2</label>
    </ligand>
</feature>
<feature type="binding site" evidence="1">
    <location>
        <position position="242"/>
    </location>
    <ligand>
        <name>Mg(2+)</name>
        <dbReference type="ChEBI" id="CHEBI:18420"/>
        <label>2</label>
    </ligand>
</feature>
<feature type="binding site" evidence="1">
    <location>
        <position position="248"/>
    </location>
    <ligand>
        <name>Mg(2+)</name>
        <dbReference type="ChEBI" id="CHEBI:18420"/>
        <label>3</label>
    </ligand>
</feature>
<protein>
    <recommendedName>
        <fullName evidence="5">Trichodiene synthase</fullName>
        <ecNumber evidence="2">4.2.3.6</ecNumber>
    </recommendedName>
    <alternativeName>
        <fullName evidence="5">Sesquiterpene cyclase TRI5</fullName>
        <shortName evidence="6">TS</shortName>
    </alternativeName>
    <alternativeName>
        <fullName evidence="5">Trichothecene biosynthesis protein 5</fullName>
    </alternativeName>
</protein>
<accession>G0LES5</accession>
<sequence>MVELNDVPGEEEFPRATYLETMVRLLDTVSYNDENFTDEERVECLKYAYGKAAEHFAQPHVQETLKVPPKRMAAALKTIVGMCVYSWCRVSKEVMADLSIHYTYTLLLDDSREEPAGTMATWYEDLLNARPQAHGWWRLVNDFIPNVLRHYGGYCQMNMVRSTIDFFQGCWIEQHNFKGFRGSSDYPGFLRRINGLGHCVGSSIWPIELVDEEEHFLEITTAIAQMENWMVWTNDLFSFYKEYFAERDQTSLVNNYVECEGITLDQALDKLCKDTIRSSEEIIQVFHDKDPKMYEILTRFIQGYITWHLCDDRYRLVEVYEAAGDDPVAQKFKKYAESARRVGAIDPARYCVPSVTELCEREMAKQSAGRSWDFGLGKIANKISSVAQ</sequence>
<evidence type="ECO:0000250" key="1">
    <source>
        <dbReference type="UniProtKB" id="P13513"/>
    </source>
</evidence>
<evidence type="ECO:0000269" key="2">
    <source>
    </source>
</evidence>
<evidence type="ECO:0000269" key="3">
    <source>
    </source>
</evidence>
<evidence type="ECO:0000269" key="4">
    <source>
    </source>
</evidence>
<evidence type="ECO:0000303" key="5">
    <source>
    </source>
</evidence>
<evidence type="ECO:0000305" key="6"/>
<evidence type="ECO:0000305" key="7">
    <source>
    </source>
</evidence>
<evidence type="ECO:0000305" key="8">
    <source>
    </source>
</evidence>
<comment type="function">
    <text evidence="2 3 7 8">Trichodiene synthase; part of the gene cluster that mediates the production of the antimicrobial trichothecene harzianum A (HA) that plays a role in Botrytis cinerea antagonistic activity and plant defense priming (PubMed:21642405, PubMed:24889745). The biosynthesis of harzianum A begins with the cyclization of farnesyl diphosphate to trichodiene and is catalyzed by the trichodiene synthase TRI5 (PubMed:21642405). Trichodiene undergoes a series of oxygenations catalyzed by the cytochrome P450 monooxygenase TRI4. TRI4 controls the addition of 3 oxygens at C-2, C-11, and the C-12, C-13-epoxide to form the intermediate isotrichodiol (PubMed:21642405). Isotrichodiol then undergoes a non-enzymatic isomerization and cyclization to form 12,13-epoxytrichothec-9-ene (EPT) which is further converted to trichodermol by the cytochrome P450 monooxygenase TRI11 via C-4 hydroxylation (PubMed:21642405). The last step of HA synthesis is esterification of an octatriendioyl moiety to the C-4 oxygen of trichodermol. The octatriendioyl moiety is probably produced by the polyketide synthase TRI17 and the esterification performed by the trichothecene O-acetyltransferase TRI3 (Probable).</text>
</comment>
<comment type="catalytic activity">
    <reaction evidence="2">
        <text>(2E,6E)-farnesyl diphosphate = trichodiene + diphosphate</text>
        <dbReference type="Rhea" id="RHEA:12052"/>
        <dbReference type="ChEBI" id="CHEBI:15861"/>
        <dbReference type="ChEBI" id="CHEBI:33019"/>
        <dbReference type="ChEBI" id="CHEBI:175763"/>
        <dbReference type="EC" id="4.2.3.6"/>
    </reaction>
</comment>
<comment type="cofactor">
    <cofactor evidence="1">
        <name>Mg(2+)</name>
        <dbReference type="ChEBI" id="CHEBI:18420"/>
    </cofactor>
    <cofactor evidence="1">
        <name>Mn(2+)</name>
        <dbReference type="ChEBI" id="CHEBI:29035"/>
    </cofactor>
    <text evidence="6">Some of the cofactor binding sites show unusual localization within the protein.</text>
</comment>
<comment type="pathway">
    <text evidence="2">Sesquiterpene biosynthesis; trichothecene biosynthesis.</text>
</comment>
<comment type="induction">
    <text evidence="4">Expression is positively regulated by the cluster-specific transcription factor TRI6.</text>
</comment>
<comment type="disruption phenotype">
    <text evidence="3">Impairs the production of harzianum A and leads to the production of a larger quantity of the aspinolides B and C.</text>
</comment>
<comment type="miscellaneous">
    <text evidence="6">Trichothecenes are sesquiterpenoid toxins that act by inhibiting protein biosynthesis.</text>
</comment>
<comment type="similarity">
    <text evidence="6">Belongs to the trichodiene synthase family.</text>
</comment>
<gene>
    <name evidence="5" type="primary">TRI5</name>
</gene>
<proteinExistence type="evidence at protein level"/>
<keyword id="KW-0456">Lyase</keyword>
<keyword id="KW-0460">Magnesium</keyword>
<keyword id="KW-0479">Metal-binding</keyword>
<organism>
    <name type="scientific">Trichoderma arundinaceum</name>
    <dbReference type="NCBI Taxonomy" id="490622"/>
    <lineage>
        <taxon>Eukaryota</taxon>
        <taxon>Fungi</taxon>
        <taxon>Dikarya</taxon>
        <taxon>Ascomycota</taxon>
        <taxon>Pezizomycotina</taxon>
        <taxon>Sordariomycetes</taxon>
        <taxon>Hypocreomycetidae</taxon>
        <taxon>Hypocreales</taxon>
        <taxon>Hypocreaceae</taxon>
        <taxon>Trichoderma</taxon>
    </lineage>
</organism>
<dbReference type="EC" id="4.2.3.6" evidence="2"/>
<dbReference type="EMBL" id="FR715494">
    <property type="protein sequence ID" value="CBX36793.1"/>
    <property type="molecule type" value="Genomic_DNA"/>
</dbReference>
<dbReference type="SMR" id="G0LES5"/>
<dbReference type="OrthoDB" id="2998174at2759"/>
<dbReference type="BioCyc" id="MetaCyc:MONOMER-19544"/>
<dbReference type="UniPathway" id="UPA00267"/>
<dbReference type="GO" id="GO:0046872">
    <property type="term" value="F:metal ion binding"/>
    <property type="evidence" value="ECO:0007669"/>
    <property type="project" value="UniProtKB-KW"/>
</dbReference>
<dbReference type="GO" id="GO:0045482">
    <property type="term" value="F:trichodiene synthase activity"/>
    <property type="evidence" value="ECO:0007669"/>
    <property type="project" value="UniProtKB-EC"/>
</dbReference>
<dbReference type="GO" id="GO:0016106">
    <property type="term" value="P:sesquiterpenoid biosynthetic process"/>
    <property type="evidence" value="ECO:0007669"/>
    <property type="project" value="InterPro"/>
</dbReference>
<dbReference type="Gene3D" id="1.10.600.10">
    <property type="entry name" value="Farnesyl Diphosphate Synthase"/>
    <property type="match status" value="1"/>
</dbReference>
<dbReference type="InterPro" id="IPR008949">
    <property type="entry name" value="Isoprenoid_synthase_dom_sf"/>
</dbReference>
<dbReference type="InterPro" id="IPR010458">
    <property type="entry name" value="TRI5_ascomyc"/>
</dbReference>
<dbReference type="InterPro" id="IPR024652">
    <property type="entry name" value="Trichodiene_synth"/>
</dbReference>
<dbReference type="Pfam" id="PF06330">
    <property type="entry name" value="TRI5"/>
    <property type="match status" value="1"/>
</dbReference>
<dbReference type="PIRSF" id="PIRSF001388">
    <property type="entry name" value="TRI5"/>
    <property type="match status" value="1"/>
</dbReference>
<dbReference type="SFLD" id="SFLDS00005">
    <property type="entry name" value="Isoprenoid_Synthase_Type_I"/>
    <property type="match status" value="1"/>
</dbReference>
<dbReference type="SFLD" id="SFLDG01021">
    <property type="entry name" value="Trichodiene_Synthase_Like"/>
    <property type="match status" value="1"/>
</dbReference>
<dbReference type="SUPFAM" id="SSF48576">
    <property type="entry name" value="Terpenoid synthases"/>
    <property type="match status" value="1"/>
</dbReference>
<name>TRI5_TRIAR</name>
<reference key="1">
    <citation type="journal article" date="2011" name="Appl. Environ. Microbiol.">
        <title>Identification of loci and functional characterization of trichothecene biosynthesis genes in filamentous fungi of the genus Trichoderma.</title>
        <authorList>
            <person name="Cardoza R.E."/>
            <person name="Malmierca M.G."/>
            <person name="Hermosa M.R."/>
            <person name="Alexander N.J."/>
            <person name="McCormick S.P."/>
            <person name="Proctor R.H."/>
            <person name="Tijerino A.M."/>
            <person name="Rumbero A."/>
            <person name="Monte E."/>
            <person name="Gutierrez S."/>
        </authorList>
    </citation>
    <scope>NUCLEOTIDE SEQUENCE [GENOMIC DNA]</scope>
    <scope>IDENTIFICATION</scope>
    <scope>FUNCTION</scope>
    <scope>CATALYTIC ACTIVITY</scope>
    <scope>PATHWAY</scope>
    <source>
        <strain>IBT 40837</strain>
    </source>
</reference>
<reference key="2">
    <citation type="journal article" date="2015" name="Environ. Microbiol.">
        <title>Novel aspinolide production by Trichoderma arundinaceum with a potential role in Botrytis cinerea antagonistic activity and plant defence priming.</title>
        <authorList>
            <person name="Malmierca M.G."/>
            <person name="Barua J."/>
            <person name="McCormick S.P."/>
            <person name="Izquierdo-Bueno I."/>
            <person name="Cardoza R.E."/>
            <person name="Alexander N.J."/>
            <person name="Hermosa R."/>
            <person name="Collado I.G."/>
            <person name="Monte E."/>
            <person name="Gutierrez S."/>
        </authorList>
    </citation>
    <scope>FUNCTION</scope>
    <scope>DISRUPTION PHENOTYPE</scope>
</reference>
<reference key="3">
    <citation type="journal article" date="2018" name="Fungal Genet. Biol.">
        <title>Effect of deletion of a trichothecene toxin regulatory gene on the secondary metabolism transcriptome of the saprotrophic fungus Trichoderma arundinaceum.</title>
        <authorList>
            <person name="Lindo L."/>
            <person name="McCormick S.P."/>
            <person name="Cardoza R.E."/>
            <person name="Brown D.W."/>
            <person name="Kim H.S."/>
            <person name="Alexander N.J."/>
            <person name="Proctor R.H."/>
            <person name="Gutierrez S."/>
        </authorList>
    </citation>
    <scope>FUNCTION</scope>
    <scope>INDUCTION</scope>
</reference>